<name>HSD_MYCBO</name>
<organism>
    <name type="scientific">Mycobacterium bovis (strain ATCC BAA-935 / AF2122/97)</name>
    <dbReference type="NCBI Taxonomy" id="233413"/>
    <lineage>
        <taxon>Bacteria</taxon>
        <taxon>Bacillati</taxon>
        <taxon>Actinomycetota</taxon>
        <taxon>Actinomycetes</taxon>
        <taxon>Mycobacteriales</taxon>
        <taxon>Mycobacteriaceae</taxon>
        <taxon>Mycobacterium</taxon>
        <taxon>Mycobacterium tuberculosis complex</taxon>
    </lineage>
</organism>
<reference key="1">
    <citation type="journal article" date="2003" name="Proc. Natl. Acad. Sci. U.S.A.">
        <title>The complete genome sequence of Mycobacterium bovis.</title>
        <authorList>
            <person name="Garnier T."/>
            <person name="Eiglmeier K."/>
            <person name="Camus J.-C."/>
            <person name="Medina N."/>
            <person name="Mansoor H."/>
            <person name="Pryor M."/>
            <person name="Duthoy S."/>
            <person name="Grondin S."/>
            <person name="Lacroix C."/>
            <person name="Monsempe C."/>
            <person name="Simon S."/>
            <person name="Harris B."/>
            <person name="Atkin R."/>
            <person name="Doggett J."/>
            <person name="Mayes R."/>
            <person name="Keating L."/>
            <person name="Wheeler P.R."/>
            <person name="Parkhill J."/>
            <person name="Barrell B.G."/>
            <person name="Cole S.T."/>
            <person name="Gordon S.V."/>
            <person name="Hewinson R.G."/>
        </authorList>
    </citation>
    <scope>NUCLEOTIDE SEQUENCE [LARGE SCALE GENOMIC DNA]</scope>
    <source>
        <strain>ATCC BAA-935 / AF2122/97</strain>
    </source>
</reference>
<reference key="2">
    <citation type="journal article" date="2017" name="Genome Announc.">
        <title>Updated reference genome sequence and annotation of Mycobacterium bovis AF2122/97.</title>
        <authorList>
            <person name="Malone K.M."/>
            <person name="Farrell D."/>
            <person name="Stuber T.P."/>
            <person name="Schubert O.T."/>
            <person name="Aebersold R."/>
            <person name="Robbe-Austerman S."/>
            <person name="Gordon S.V."/>
        </authorList>
    </citation>
    <scope>NUCLEOTIDE SEQUENCE [LARGE SCALE GENOMIC DNA]</scope>
    <scope>GENOME REANNOTATION</scope>
    <source>
        <strain>ATCC BAA-935 / AF2122/97</strain>
    </source>
</reference>
<evidence type="ECO:0000250" key="1">
    <source>
        <dbReference type="UniProtKB" id="P9WGT1"/>
    </source>
</evidence>
<evidence type="ECO:0000305" key="2"/>
<feature type="chain" id="PRO_0000054711" description="3-alpha-(or 20-beta)-hydroxysteroid dehydrogenase">
    <location>
        <begin position="1"/>
        <end position="260"/>
    </location>
</feature>
<feature type="active site" description="Proton acceptor" evidence="1">
    <location>
        <position position="153"/>
    </location>
</feature>
<feature type="binding site" evidence="1">
    <location>
        <position position="17"/>
    </location>
    <ligand>
        <name>NAD(+)</name>
        <dbReference type="ChEBI" id="CHEBI:57540"/>
    </ligand>
</feature>
<feature type="binding site" evidence="1">
    <location>
        <position position="19"/>
    </location>
    <ligand>
        <name>NAD(+)</name>
        <dbReference type="ChEBI" id="CHEBI:57540"/>
    </ligand>
</feature>
<feature type="binding site" evidence="1">
    <location>
        <position position="38"/>
    </location>
    <ligand>
        <name>NAD(+)</name>
        <dbReference type="ChEBI" id="CHEBI:57540"/>
    </ligand>
</feature>
<feature type="binding site" evidence="1">
    <location>
        <position position="61"/>
    </location>
    <ligand>
        <name>NAD(+)</name>
        <dbReference type="ChEBI" id="CHEBI:57540"/>
    </ligand>
</feature>
<feature type="binding site" evidence="1">
    <location>
        <position position="62"/>
    </location>
    <ligand>
        <name>NAD(+)</name>
        <dbReference type="ChEBI" id="CHEBI:57540"/>
    </ligand>
</feature>
<feature type="binding site" evidence="1">
    <location>
        <position position="88"/>
    </location>
    <ligand>
        <name>NAD(+)</name>
        <dbReference type="ChEBI" id="CHEBI:57540"/>
    </ligand>
</feature>
<feature type="binding site" evidence="1">
    <location>
        <position position="153"/>
    </location>
    <ligand>
        <name>NAD(+)</name>
        <dbReference type="ChEBI" id="CHEBI:57540"/>
    </ligand>
</feature>
<feature type="binding site" evidence="1">
    <location>
        <position position="157"/>
    </location>
    <ligand>
        <name>NAD(+)</name>
        <dbReference type="ChEBI" id="CHEBI:57540"/>
    </ligand>
</feature>
<feature type="binding site" evidence="1">
    <location>
        <position position="186"/>
    </location>
    <ligand>
        <name>NAD(+)</name>
        <dbReference type="ChEBI" id="CHEBI:57540"/>
    </ligand>
</feature>
<feature type="binding site" evidence="1">
    <location>
        <position position="188"/>
    </location>
    <ligand>
        <name>NAD(+)</name>
        <dbReference type="ChEBI" id="CHEBI:57540"/>
    </ligand>
</feature>
<feature type="binding site" evidence="1">
    <location>
        <position position="191"/>
    </location>
    <ligand>
        <name>NAD(+)</name>
        <dbReference type="ChEBI" id="CHEBI:57540"/>
    </ligand>
</feature>
<sequence length="260" mass="27030">MSGRLIGKVALVSGGARGMGASHVRAMVAEGAKVVFGDILDEEGKAVAAELADAARYVHLDVTQPAQWTAAVDTAVTAFGGLHVLVNNAGILNIGTIEDYALTEWQRILDVNLTGVFLGIRAVVKPMKEAGRGSIINISSIEGLAGTVACHGYTATKFAVRGLTKSTALELGPSGIRVNSIHPGLVKTPMTDWVPEDIFQTALGRAAEPVEVSNLVVYLASDESSYSTGAEFVVDGGTVAGLAHNDFGAVEVSSQPEWVT</sequence>
<dbReference type="EC" id="1.1.1.53" evidence="1"/>
<dbReference type="EMBL" id="LT708304">
    <property type="protein sequence ID" value="SIU00632.1"/>
    <property type="molecule type" value="Genomic_DNA"/>
</dbReference>
<dbReference type="RefSeq" id="NP_855675.1">
    <property type="nucleotide sequence ID" value="NC_002945.3"/>
</dbReference>
<dbReference type="RefSeq" id="WP_003410047.1">
    <property type="nucleotide sequence ID" value="NC_002945.4"/>
</dbReference>
<dbReference type="SMR" id="P69166"/>
<dbReference type="KEGG" id="mbo:BQ2027_MB2025"/>
<dbReference type="PATRIC" id="fig|233413.5.peg.2224"/>
<dbReference type="UniPathway" id="UPA00722"/>
<dbReference type="Proteomes" id="UP000001419">
    <property type="component" value="Chromosome"/>
</dbReference>
<dbReference type="GO" id="GO:0047044">
    <property type="term" value="F:androstan-3-alpha,17-beta-diol dehydrogenase (NAD+) activity"/>
    <property type="evidence" value="ECO:0007669"/>
    <property type="project" value="UniProtKB-EC"/>
</dbReference>
<dbReference type="GO" id="GO:0006706">
    <property type="term" value="P:steroid catabolic process"/>
    <property type="evidence" value="ECO:0007669"/>
    <property type="project" value="UniProtKB-UniPathway"/>
</dbReference>
<dbReference type="CDD" id="cd05341">
    <property type="entry name" value="3beta-17beta-HSD_like_SDR_c"/>
    <property type="match status" value="1"/>
</dbReference>
<dbReference type="FunFam" id="3.40.50.720:FF:000084">
    <property type="entry name" value="Short-chain dehydrogenase reductase"/>
    <property type="match status" value="1"/>
</dbReference>
<dbReference type="Gene3D" id="3.40.50.720">
    <property type="entry name" value="NAD(P)-binding Rossmann-like Domain"/>
    <property type="match status" value="1"/>
</dbReference>
<dbReference type="InterPro" id="IPR036291">
    <property type="entry name" value="NAD(P)-bd_dom_sf"/>
</dbReference>
<dbReference type="InterPro" id="IPR020904">
    <property type="entry name" value="Sc_DH/Rdtase_CS"/>
</dbReference>
<dbReference type="InterPro" id="IPR002347">
    <property type="entry name" value="SDR_fam"/>
</dbReference>
<dbReference type="NCBIfam" id="NF005559">
    <property type="entry name" value="PRK07231.1"/>
    <property type="match status" value="1"/>
</dbReference>
<dbReference type="PANTHER" id="PTHR43180">
    <property type="entry name" value="3-OXOACYL-(ACYL-CARRIER-PROTEIN) REDUCTASE (AFU_ORTHOLOGUE AFUA_6G11210)"/>
    <property type="match status" value="1"/>
</dbReference>
<dbReference type="PANTHER" id="PTHR43180:SF28">
    <property type="entry name" value="NAD(P)-BINDING ROSSMANN-FOLD SUPERFAMILY PROTEIN"/>
    <property type="match status" value="1"/>
</dbReference>
<dbReference type="Pfam" id="PF13561">
    <property type="entry name" value="adh_short_C2"/>
    <property type="match status" value="1"/>
</dbReference>
<dbReference type="PRINTS" id="PR00081">
    <property type="entry name" value="GDHRDH"/>
</dbReference>
<dbReference type="PRINTS" id="PR00080">
    <property type="entry name" value="SDRFAMILY"/>
</dbReference>
<dbReference type="SUPFAM" id="SSF51735">
    <property type="entry name" value="NAD(P)-binding Rossmann-fold domains"/>
    <property type="match status" value="1"/>
</dbReference>
<dbReference type="PROSITE" id="PS00061">
    <property type="entry name" value="ADH_SHORT"/>
    <property type="match status" value="1"/>
</dbReference>
<proteinExistence type="inferred from homology"/>
<accession>P69166</accession>
<accession>A0A1R3Y004</accession>
<accession>Q10855</accession>
<accession>X2BJ87</accession>
<protein>
    <recommendedName>
        <fullName evidence="1">3-alpha-(or 20-beta)-hydroxysteroid dehydrogenase</fullName>
        <ecNumber evidence="1">1.1.1.53</ecNumber>
    </recommendedName>
</protein>
<keyword id="KW-0443">Lipid metabolism</keyword>
<keyword id="KW-0520">NAD</keyword>
<keyword id="KW-0560">Oxidoreductase</keyword>
<keyword id="KW-1185">Reference proteome</keyword>
<keyword id="KW-0753">Steroid metabolism</keyword>
<gene>
    <name type="primary">fabG3</name>
    <name type="ordered locus">BQ2027_MB2025</name>
</gene>
<comment type="function">
    <text evidence="1">Probably involved in steroid metabolism.</text>
</comment>
<comment type="catalytic activity">
    <reaction evidence="1">
        <text>androstan-3alpha,17beta-diol + NAD(+) = 17beta-hydroxyandrostanone + NADH + H(+)</text>
        <dbReference type="Rhea" id="RHEA:22400"/>
        <dbReference type="ChEBI" id="CHEBI:15378"/>
        <dbReference type="ChEBI" id="CHEBI:18011"/>
        <dbReference type="ChEBI" id="CHEBI:57540"/>
        <dbReference type="ChEBI" id="CHEBI:57945"/>
        <dbReference type="ChEBI" id="CHEBI:85278"/>
        <dbReference type="EC" id="1.1.1.53"/>
    </reaction>
</comment>
<comment type="pathway">
    <text evidence="1">Lipid metabolism; steroid degradation.</text>
</comment>
<comment type="subunit">
    <text evidence="1">Homotetramer.</text>
</comment>
<comment type="similarity">
    <text evidence="2">Belongs to the short-chain dehydrogenases/reductases (SDR) family.</text>
</comment>